<feature type="chain" id="PRO_1000200261" description="Exodeoxyribonuclease 7 small subunit">
    <location>
        <begin position="1"/>
        <end position="70"/>
    </location>
</feature>
<accession>C1C7H5</accession>
<organism>
    <name type="scientific">Streptococcus pneumoniae (strain 70585)</name>
    <dbReference type="NCBI Taxonomy" id="488221"/>
    <lineage>
        <taxon>Bacteria</taxon>
        <taxon>Bacillati</taxon>
        <taxon>Bacillota</taxon>
        <taxon>Bacilli</taxon>
        <taxon>Lactobacillales</taxon>
        <taxon>Streptococcaceae</taxon>
        <taxon>Streptococcus</taxon>
    </lineage>
</organism>
<comment type="function">
    <text evidence="1">Bidirectionally degrades single-stranded DNA into large acid-insoluble oligonucleotides, which are then degraded further into small acid-soluble oligonucleotides.</text>
</comment>
<comment type="catalytic activity">
    <reaction evidence="1">
        <text>Exonucleolytic cleavage in either 5'- to 3'- or 3'- to 5'-direction to yield nucleoside 5'-phosphates.</text>
        <dbReference type="EC" id="3.1.11.6"/>
    </reaction>
</comment>
<comment type="subunit">
    <text evidence="1">Heterooligomer composed of large and small subunits.</text>
</comment>
<comment type="subcellular location">
    <subcellularLocation>
        <location evidence="1">Cytoplasm</location>
    </subcellularLocation>
</comment>
<comment type="similarity">
    <text evidence="1">Belongs to the XseB family.</text>
</comment>
<evidence type="ECO:0000255" key="1">
    <source>
        <dbReference type="HAMAP-Rule" id="MF_00337"/>
    </source>
</evidence>
<protein>
    <recommendedName>
        <fullName evidence="1">Exodeoxyribonuclease 7 small subunit</fullName>
        <ecNumber evidence="1">3.1.11.6</ecNumber>
    </recommendedName>
    <alternativeName>
        <fullName evidence="1">Exodeoxyribonuclease VII small subunit</fullName>
        <shortName evidence="1">Exonuclease VII small subunit</shortName>
    </alternativeName>
</protein>
<proteinExistence type="inferred from homology"/>
<gene>
    <name evidence="1" type="primary">xseB</name>
    <name type="ordered locus">SP70585_1256</name>
</gene>
<reference key="1">
    <citation type="journal article" date="2010" name="Genome Biol.">
        <title>Structure and dynamics of the pan-genome of Streptococcus pneumoniae and closely related species.</title>
        <authorList>
            <person name="Donati C."/>
            <person name="Hiller N.L."/>
            <person name="Tettelin H."/>
            <person name="Muzzi A."/>
            <person name="Croucher N.J."/>
            <person name="Angiuoli S.V."/>
            <person name="Oggioni M."/>
            <person name="Dunning Hotopp J.C."/>
            <person name="Hu F.Z."/>
            <person name="Riley D.R."/>
            <person name="Covacci A."/>
            <person name="Mitchell T.J."/>
            <person name="Bentley S.D."/>
            <person name="Kilian M."/>
            <person name="Ehrlich G.D."/>
            <person name="Rappuoli R."/>
            <person name="Moxon E.R."/>
            <person name="Masignani V."/>
        </authorList>
    </citation>
    <scope>NUCLEOTIDE SEQUENCE [LARGE SCALE GENOMIC DNA]</scope>
    <source>
        <strain>70585</strain>
    </source>
</reference>
<sequence length="70" mass="7850">MSKQKKFEENLAELETIVQSLENGEIALEDAITAFQKGMVLSKELQATLDKAEKTLVKVMQEDGTESDFE</sequence>
<name>EX7S_STRP7</name>
<keyword id="KW-0963">Cytoplasm</keyword>
<keyword id="KW-0269">Exonuclease</keyword>
<keyword id="KW-0378">Hydrolase</keyword>
<keyword id="KW-0540">Nuclease</keyword>
<dbReference type="EC" id="3.1.11.6" evidence="1"/>
<dbReference type="EMBL" id="CP000918">
    <property type="protein sequence ID" value="ACO16370.1"/>
    <property type="molecule type" value="Genomic_DNA"/>
</dbReference>
<dbReference type="RefSeq" id="WP_000043230.1">
    <property type="nucleotide sequence ID" value="NC_012468.1"/>
</dbReference>
<dbReference type="SMR" id="C1C7H5"/>
<dbReference type="KEGG" id="snm:SP70585_1256"/>
<dbReference type="HOGENOM" id="CLU_145918_3_2_9"/>
<dbReference type="Proteomes" id="UP000002211">
    <property type="component" value="Chromosome"/>
</dbReference>
<dbReference type="GO" id="GO:0005829">
    <property type="term" value="C:cytosol"/>
    <property type="evidence" value="ECO:0007669"/>
    <property type="project" value="TreeGrafter"/>
</dbReference>
<dbReference type="GO" id="GO:0009318">
    <property type="term" value="C:exodeoxyribonuclease VII complex"/>
    <property type="evidence" value="ECO:0007669"/>
    <property type="project" value="InterPro"/>
</dbReference>
<dbReference type="GO" id="GO:0008855">
    <property type="term" value="F:exodeoxyribonuclease VII activity"/>
    <property type="evidence" value="ECO:0007669"/>
    <property type="project" value="UniProtKB-UniRule"/>
</dbReference>
<dbReference type="GO" id="GO:0006308">
    <property type="term" value="P:DNA catabolic process"/>
    <property type="evidence" value="ECO:0007669"/>
    <property type="project" value="UniProtKB-UniRule"/>
</dbReference>
<dbReference type="FunFam" id="1.10.287.1040:FF:000003">
    <property type="entry name" value="Exodeoxyribonuclease 7 small subunit"/>
    <property type="match status" value="1"/>
</dbReference>
<dbReference type="Gene3D" id="1.10.287.1040">
    <property type="entry name" value="Exonuclease VII, small subunit"/>
    <property type="match status" value="1"/>
</dbReference>
<dbReference type="HAMAP" id="MF_00337">
    <property type="entry name" value="Exonuc_7_S"/>
    <property type="match status" value="1"/>
</dbReference>
<dbReference type="InterPro" id="IPR003761">
    <property type="entry name" value="Exonuc_VII_S"/>
</dbReference>
<dbReference type="InterPro" id="IPR037004">
    <property type="entry name" value="Exonuc_VII_ssu_sf"/>
</dbReference>
<dbReference type="NCBIfam" id="NF002138">
    <property type="entry name" value="PRK00977.1-2"/>
    <property type="match status" value="1"/>
</dbReference>
<dbReference type="NCBIfam" id="TIGR01280">
    <property type="entry name" value="xseB"/>
    <property type="match status" value="1"/>
</dbReference>
<dbReference type="PANTHER" id="PTHR34137">
    <property type="entry name" value="EXODEOXYRIBONUCLEASE 7 SMALL SUBUNIT"/>
    <property type="match status" value="1"/>
</dbReference>
<dbReference type="PANTHER" id="PTHR34137:SF1">
    <property type="entry name" value="EXODEOXYRIBONUCLEASE 7 SMALL SUBUNIT"/>
    <property type="match status" value="1"/>
</dbReference>
<dbReference type="Pfam" id="PF02609">
    <property type="entry name" value="Exonuc_VII_S"/>
    <property type="match status" value="1"/>
</dbReference>
<dbReference type="PIRSF" id="PIRSF006488">
    <property type="entry name" value="Exonuc_VII_S"/>
    <property type="match status" value="1"/>
</dbReference>
<dbReference type="SUPFAM" id="SSF116842">
    <property type="entry name" value="XseB-like"/>
    <property type="match status" value="1"/>
</dbReference>